<comment type="function">
    <text evidence="5 6 7 8">V region of the variable domain of immunoglobulin light chains that participates in the antigen recognition (PubMed:24600447). Immunoglobulins, also known as antibodies, are membrane-bound or secreted glycoproteins produced by B lymphocytes. In the recognition phase of humoral immunity, the membrane-bound immunoglobulins serve as receptors which, upon binding of a specific antigen, trigger the clonal expansion and differentiation of B lymphocytes into immunoglobulins-secreting plasma cells. Secreted immunoglobulins mediate the effector phase of humoral immunity, which results in the elimination of bound antigens (PubMed:20176268, PubMed:22158414). The antigen binding site is formed by the variable domain of one heavy chain, together with that of its associated light chain. Thus, each immunoglobulin has two antigen binding sites with remarkable affinity for a particular antigen. The variable domains are assembled by a process called V-(D)-J rearrangement and can then be subjected to somatic hypermutations which, after exposure to antigen and selection, allow affinity maturation for a particular antigen (PubMed:17576170, PubMed:20176268).</text>
</comment>
<comment type="subunit">
    <text evidence="6">Immunoglobulins are composed of two identical heavy chains and two identical light chains; disulfide-linked.</text>
</comment>
<comment type="subcellular location">
    <subcellularLocation>
        <location evidence="6 7">Secreted</location>
    </subcellularLocation>
    <subcellularLocation>
        <location evidence="6 7">Cell membrane</location>
    </subcellularLocation>
</comment>
<comment type="polymorphism">
    <text>There are several alleles. The sequence shown is that of IMGT allele IGKV1-6*01.</text>
</comment>
<comment type="caution">
    <text evidence="10">For an example of a full-length immunoglobulin kappa light chain see AC P0DOX7.</text>
</comment>
<organism>
    <name type="scientific">Homo sapiens</name>
    <name type="common">Human</name>
    <dbReference type="NCBI Taxonomy" id="9606"/>
    <lineage>
        <taxon>Eukaryota</taxon>
        <taxon>Metazoa</taxon>
        <taxon>Chordata</taxon>
        <taxon>Craniata</taxon>
        <taxon>Vertebrata</taxon>
        <taxon>Euteleostomi</taxon>
        <taxon>Mammalia</taxon>
        <taxon>Eutheria</taxon>
        <taxon>Euarchontoglires</taxon>
        <taxon>Primates</taxon>
        <taxon>Haplorrhini</taxon>
        <taxon>Catarrhini</taxon>
        <taxon>Hominidae</taxon>
        <taxon>Homo</taxon>
    </lineage>
</organism>
<name>KV106_HUMAN</name>
<protein>
    <recommendedName>
        <fullName evidence="4 9">Immunoglobulin kappa variable 1-6</fullName>
    </recommendedName>
</protein>
<dbReference type="EMBL" id="AC245015">
    <property type="status" value="NOT_ANNOTATED_CDS"/>
    <property type="molecule type" value="Genomic_DNA"/>
</dbReference>
<dbReference type="EMDB" id="EMD-60281"/>
<dbReference type="SMR" id="A0A0C4DH72"/>
<dbReference type="FunCoup" id="A0A0C4DH72">
    <property type="interactions" value="304"/>
</dbReference>
<dbReference type="IMGT_GENE-DB" id="IGKV1-6"/>
<dbReference type="BioMuta" id="IGKV1-6"/>
<dbReference type="jPOST" id="A0A0C4DH72"/>
<dbReference type="MassIVE" id="A0A0C4DH72"/>
<dbReference type="Ensembl" id="ENST00000464162.1">
    <property type="protein sequence ID" value="ENSP00000420361.1"/>
    <property type="gene ID" value="ENSG00000239855.1"/>
</dbReference>
<dbReference type="Ensembl" id="ENST00000632891.1">
    <property type="protein sequence ID" value="ENSP00000488804.1"/>
    <property type="gene ID" value="ENSG00000282163.1"/>
</dbReference>
<dbReference type="AGR" id="HGNC:5742"/>
<dbReference type="GeneCards" id="IGKV1-6"/>
<dbReference type="HGNC" id="HGNC:5742">
    <property type="gene designation" value="IGKV1-6"/>
</dbReference>
<dbReference type="HPA" id="ENSG00000239855">
    <property type="expression patterns" value="Tissue enhanced (intestine, lymphoid tissue)"/>
</dbReference>
<dbReference type="neXtProt" id="NX_A0A0C4DH72"/>
<dbReference type="OpenTargets" id="ENSG00000239855"/>
<dbReference type="VEuPathDB" id="HostDB:ENSG00000239855"/>
<dbReference type="GeneTree" id="ENSGT00940000153048"/>
<dbReference type="HOGENOM" id="CLU_077975_4_1_1"/>
<dbReference type="InParanoid" id="A0A0C4DH72"/>
<dbReference type="OMA" id="MINCVDI"/>
<dbReference type="PAN-GO" id="A0A0C4DH72">
    <property type="GO annotations" value="3 GO annotations based on evolutionary models"/>
</dbReference>
<dbReference type="PhylomeDB" id="A0A0C4DH72"/>
<dbReference type="SignaLink" id="A0A0C4DH72"/>
<dbReference type="Pharos" id="A0A0C4DH72">
    <property type="development level" value="Tdark"/>
</dbReference>
<dbReference type="PRO" id="PR:A0A0C4DH72"/>
<dbReference type="Proteomes" id="UP000005640">
    <property type="component" value="Chromosome 2"/>
</dbReference>
<dbReference type="RNAct" id="A0A0C4DH72">
    <property type="molecule type" value="protein"/>
</dbReference>
<dbReference type="Bgee" id="ENSG00000239855">
    <property type="expression patterns" value="Expressed in rectum and 94 other cell types or tissues"/>
</dbReference>
<dbReference type="GO" id="GO:0005576">
    <property type="term" value="C:extracellular region"/>
    <property type="evidence" value="ECO:0007669"/>
    <property type="project" value="UniProtKB-SubCell"/>
</dbReference>
<dbReference type="GO" id="GO:0019814">
    <property type="term" value="C:immunoglobulin complex"/>
    <property type="evidence" value="ECO:0000318"/>
    <property type="project" value="GO_Central"/>
</dbReference>
<dbReference type="GO" id="GO:0005886">
    <property type="term" value="C:plasma membrane"/>
    <property type="evidence" value="ECO:0007669"/>
    <property type="project" value="UniProtKB-SubCell"/>
</dbReference>
<dbReference type="GO" id="GO:0002250">
    <property type="term" value="P:adaptive immune response"/>
    <property type="evidence" value="ECO:0007669"/>
    <property type="project" value="UniProtKB-KW"/>
</dbReference>
<dbReference type="GO" id="GO:0006955">
    <property type="term" value="P:immune response"/>
    <property type="evidence" value="ECO:0000318"/>
    <property type="project" value="GO_Central"/>
</dbReference>
<dbReference type="CDD" id="cd04980">
    <property type="entry name" value="IgV_L_kappa"/>
    <property type="match status" value="1"/>
</dbReference>
<dbReference type="FunFam" id="2.60.40.10:FF:000212">
    <property type="entry name" value="Immunoglobulin kappa chain variable 12-38"/>
    <property type="match status" value="1"/>
</dbReference>
<dbReference type="Gene3D" id="2.60.40.10">
    <property type="entry name" value="Immunoglobulins"/>
    <property type="match status" value="1"/>
</dbReference>
<dbReference type="InterPro" id="IPR007110">
    <property type="entry name" value="Ig-like_dom"/>
</dbReference>
<dbReference type="InterPro" id="IPR036179">
    <property type="entry name" value="Ig-like_dom_sf"/>
</dbReference>
<dbReference type="InterPro" id="IPR013783">
    <property type="entry name" value="Ig-like_fold"/>
</dbReference>
<dbReference type="InterPro" id="IPR003599">
    <property type="entry name" value="Ig_sub"/>
</dbReference>
<dbReference type="InterPro" id="IPR013106">
    <property type="entry name" value="Ig_V-set"/>
</dbReference>
<dbReference type="InterPro" id="IPR050150">
    <property type="entry name" value="IgV_Light_Chain"/>
</dbReference>
<dbReference type="PANTHER" id="PTHR23267">
    <property type="entry name" value="IMMUNOGLOBULIN LIGHT CHAIN"/>
    <property type="match status" value="1"/>
</dbReference>
<dbReference type="Pfam" id="PF07686">
    <property type="entry name" value="V-set"/>
    <property type="match status" value="1"/>
</dbReference>
<dbReference type="SMART" id="SM00409">
    <property type="entry name" value="IG"/>
    <property type="match status" value="1"/>
</dbReference>
<dbReference type="SMART" id="SM00406">
    <property type="entry name" value="IGv"/>
    <property type="match status" value="1"/>
</dbReference>
<dbReference type="SUPFAM" id="SSF48726">
    <property type="entry name" value="Immunoglobulin"/>
    <property type="match status" value="1"/>
</dbReference>
<dbReference type="PROSITE" id="PS50835">
    <property type="entry name" value="IG_LIKE"/>
    <property type="match status" value="1"/>
</dbReference>
<accession>A0A0C4DH72</accession>
<evidence type="ECO:0000250" key="1">
    <source>
        <dbReference type="UniProtKB" id="P01602"/>
    </source>
</evidence>
<evidence type="ECO:0000255" key="2"/>
<evidence type="ECO:0000255" key="3">
    <source>
        <dbReference type="PROSITE-ProRule" id="PRU00114"/>
    </source>
</evidence>
<evidence type="ECO:0000303" key="4">
    <source>
    </source>
</evidence>
<evidence type="ECO:0000303" key="5">
    <source>
    </source>
</evidence>
<evidence type="ECO:0000303" key="6">
    <source>
    </source>
</evidence>
<evidence type="ECO:0000303" key="7">
    <source>
    </source>
</evidence>
<evidence type="ECO:0000303" key="8">
    <source>
    </source>
</evidence>
<evidence type="ECO:0000303" key="9">
    <source ref="3"/>
</evidence>
<evidence type="ECO:0000305" key="10"/>
<gene>
    <name evidence="4 9" type="primary">IGKV1-6</name>
</gene>
<feature type="signal peptide" evidence="2">
    <location>
        <begin position="1"/>
        <end position="22"/>
    </location>
</feature>
<feature type="chain" id="PRO_5002178556" description="Immunoglobulin kappa variable 1-6" evidence="2">
    <location>
        <begin position="23"/>
        <end position="117"/>
    </location>
</feature>
<feature type="domain" description="Ig-like" evidence="3">
    <location>
        <begin position="23"/>
        <end position="117" status="greater than"/>
    </location>
</feature>
<feature type="region of interest" description="Framework-1" evidence="1">
    <location>
        <begin position="23"/>
        <end position="45"/>
    </location>
</feature>
<feature type="region of interest" description="Complementarity-determining-1" evidence="1">
    <location>
        <begin position="46"/>
        <end position="56"/>
    </location>
</feature>
<feature type="region of interest" description="Framework-2" evidence="1">
    <location>
        <begin position="57"/>
        <end position="71"/>
    </location>
</feature>
<feature type="region of interest" description="Complementarity-determining-2" evidence="1">
    <location>
        <begin position="72"/>
        <end position="78"/>
    </location>
</feature>
<feature type="region of interest" description="Framework-3" evidence="1">
    <location>
        <begin position="79"/>
        <end position="110"/>
    </location>
</feature>
<feature type="region of interest" description="Complementarity-determining-3" evidence="1">
    <location>
        <begin position="111"/>
        <end position="117" status="greater than"/>
    </location>
</feature>
<feature type="disulfide bond" evidence="3">
    <location>
        <begin position="45"/>
        <end position="110"/>
    </location>
</feature>
<feature type="non-terminal residue">
    <location>
        <position position="117"/>
    </location>
</feature>
<reference key="1">
    <citation type="journal article" date="2005" name="Nature">
        <title>Generation and annotation of the DNA sequences of human chromosomes 2 and 4.</title>
        <authorList>
            <person name="Hillier L.W."/>
            <person name="Graves T.A."/>
            <person name="Fulton R.S."/>
            <person name="Fulton L.A."/>
            <person name="Pepin K.H."/>
            <person name="Minx P."/>
            <person name="Wagner-McPherson C."/>
            <person name="Layman D."/>
            <person name="Wylie K."/>
            <person name="Sekhon M."/>
            <person name="Becker M.C."/>
            <person name="Fewell G.A."/>
            <person name="Delehaunty K.D."/>
            <person name="Miner T.L."/>
            <person name="Nash W.E."/>
            <person name="Kremitzki C."/>
            <person name="Oddy L."/>
            <person name="Du H."/>
            <person name="Sun H."/>
            <person name="Bradshaw-Cordum H."/>
            <person name="Ali J."/>
            <person name="Carter J."/>
            <person name="Cordes M."/>
            <person name="Harris A."/>
            <person name="Isak A."/>
            <person name="van Brunt A."/>
            <person name="Nguyen C."/>
            <person name="Du F."/>
            <person name="Courtney L."/>
            <person name="Kalicki J."/>
            <person name="Ozersky P."/>
            <person name="Abbott S."/>
            <person name="Armstrong J."/>
            <person name="Belter E.A."/>
            <person name="Caruso L."/>
            <person name="Cedroni M."/>
            <person name="Cotton M."/>
            <person name="Davidson T."/>
            <person name="Desai A."/>
            <person name="Elliott G."/>
            <person name="Erb T."/>
            <person name="Fronick C."/>
            <person name="Gaige T."/>
            <person name="Haakenson W."/>
            <person name="Haglund K."/>
            <person name="Holmes A."/>
            <person name="Harkins R."/>
            <person name="Kim K."/>
            <person name="Kruchowski S.S."/>
            <person name="Strong C.M."/>
            <person name="Grewal N."/>
            <person name="Goyea E."/>
            <person name="Hou S."/>
            <person name="Levy A."/>
            <person name="Martinka S."/>
            <person name="Mead K."/>
            <person name="McLellan M.D."/>
            <person name="Meyer R."/>
            <person name="Randall-Maher J."/>
            <person name="Tomlinson C."/>
            <person name="Dauphin-Kohlberg S."/>
            <person name="Kozlowicz-Reilly A."/>
            <person name="Shah N."/>
            <person name="Swearengen-Shahid S."/>
            <person name="Snider J."/>
            <person name="Strong J.T."/>
            <person name="Thompson J."/>
            <person name="Yoakum M."/>
            <person name="Leonard S."/>
            <person name="Pearman C."/>
            <person name="Trani L."/>
            <person name="Radionenko M."/>
            <person name="Waligorski J.E."/>
            <person name="Wang C."/>
            <person name="Rock S.M."/>
            <person name="Tin-Wollam A.-M."/>
            <person name="Maupin R."/>
            <person name="Latreille P."/>
            <person name="Wendl M.C."/>
            <person name="Yang S.-P."/>
            <person name="Pohl C."/>
            <person name="Wallis J.W."/>
            <person name="Spieth J."/>
            <person name="Bieri T.A."/>
            <person name="Berkowicz N."/>
            <person name="Nelson J.O."/>
            <person name="Osborne J."/>
            <person name="Ding L."/>
            <person name="Meyer R."/>
            <person name="Sabo A."/>
            <person name="Shotland Y."/>
            <person name="Sinha P."/>
            <person name="Wohldmann P.E."/>
            <person name="Cook L.L."/>
            <person name="Hickenbotham M.T."/>
            <person name="Eldred J."/>
            <person name="Williams D."/>
            <person name="Jones T.A."/>
            <person name="She X."/>
            <person name="Ciccarelli F.D."/>
            <person name="Izaurralde E."/>
            <person name="Taylor J."/>
            <person name="Schmutz J."/>
            <person name="Myers R.M."/>
            <person name="Cox D.R."/>
            <person name="Huang X."/>
            <person name="McPherson J.D."/>
            <person name="Mardis E.R."/>
            <person name="Clifton S.W."/>
            <person name="Warren W.C."/>
            <person name="Chinwalla A.T."/>
            <person name="Eddy S.R."/>
            <person name="Marra M.A."/>
            <person name="Ovcharenko I."/>
            <person name="Furey T.S."/>
            <person name="Miller W."/>
            <person name="Eichler E.E."/>
            <person name="Bork P."/>
            <person name="Suyama M."/>
            <person name="Torrents D."/>
            <person name="Waterston R.H."/>
            <person name="Wilson R.K."/>
        </authorList>
    </citation>
    <scope>NUCLEOTIDE SEQUENCE [LARGE SCALE GENOMIC DNA] (IMGT ALLELE IGKV1-6*01)</scope>
</reference>
<reference key="2">
    <citation type="journal article" date="2001" name="Exp. Clin. Immunogenet.">
        <title>Nomenclature of the human immunoglobulin kappa (IGK) genes.</title>
        <authorList>
            <person name="Lefranc M.P."/>
        </authorList>
    </citation>
    <scope>NOMEMCLATURE</scope>
</reference>
<reference key="3">
    <citation type="book" date="2001" name="The Immunoglobulin FactsBook.">
        <title>The Immunoglobulin FactsBook.</title>
        <editorList>
            <person name="Lefranc M.P."/>
            <person name="Lefranc G."/>
        </editorList>
        <authorList>
            <person name="Lefranc M.P."/>
            <person name="Lefranc G."/>
        </authorList>
    </citation>
    <scope>NOMENCLATURE</scope>
</reference>
<reference key="4">
    <citation type="journal article" date="2007" name="Annu. Rev. Genet.">
        <title>Immunoglobulin somatic hypermutation.</title>
        <authorList>
            <person name="Teng G."/>
            <person name="Papavasiliou F.N."/>
        </authorList>
    </citation>
    <scope>REVIEW ON SOMATIC HYPERMUTATION</scope>
</reference>
<reference key="5">
    <citation type="journal article" date="2010" name="J. Allergy Clin. Immunol.">
        <title>Structure and function of immunoglobulins.</title>
        <authorList>
            <person name="Schroeder H.W. Jr."/>
            <person name="Cavacini L."/>
        </authorList>
    </citation>
    <scope>REVIEW ON IMMUNOGLOBULINS</scope>
</reference>
<reference key="6">
    <citation type="journal article" date="2012" name="Nat. Rev. Immunol.">
        <title>Molecular programming of B cell memory.</title>
        <authorList>
            <person name="McHeyzer-Williams M."/>
            <person name="Okitsu S."/>
            <person name="Wang N."/>
            <person name="McHeyzer-Williams L."/>
        </authorList>
    </citation>
    <scope>REVIEW ON FUNCTION</scope>
</reference>
<reference key="7">
    <citation type="journal article" date="2014" name="Front. Immunol.">
        <title>Immunoglobulin and T Cell Receptor Genes: IMGT((R)) and the Birth and Rise of Immunoinformatics.</title>
        <authorList>
            <person name="Lefranc M.P."/>
        </authorList>
    </citation>
    <scope>NOMENCLATURE</scope>
</reference>
<proteinExistence type="evidence at protein level"/>
<sequence>MDMRVPAQLLGLLLLWLPGARCAIQMTQSPSSLSASVGDRVTITCRASQGIRNDLGWYQQKPGKAPKLLIYAASSLQSGVPSRFSGSGSGTDFTLTISSLQPEDFATYYCLQDYNYP</sequence>
<keyword id="KW-1064">Adaptive immunity</keyword>
<keyword id="KW-1003">Cell membrane</keyword>
<keyword id="KW-1015">Disulfide bond</keyword>
<keyword id="KW-0391">Immunity</keyword>
<keyword id="KW-1280">Immunoglobulin</keyword>
<keyword id="KW-0393">Immunoglobulin domain</keyword>
<keyword id="KW-0472">Membrane</keyword>
<keyword id="KW-1267">Proteomics identification</keyword>
<keyword id="KW-1185">Reference proteome</keyword>
<keyword id="KW-0964">Secreted</keyword>
<keyword id="KW-0732">Signal</keyword>